<dbReference type="EC" id="2.5.1.n9" evidence="1"/>
<dbReference type="EMBL" id="BX571856">
    <property type="protein sequence ID" value="CAG40983.1"/>
    <property type="molecule type" value="Genomic_DNA"/>
</dbReference>
<dbReference type="RefSeq" id="WP_000272063.1">
    <property type="nucleotide sequence ID" value="NC_002952.2"/>
</dbReference>
<dbReference type="SMR" id="Q6GFF1"/>
<dbReference type="KEGG" id="sar:SAR1998"/>
<dbReference type="HOGENOM" id="CLU_095211_0_0_9"/>
<dbReference type="UniPathway" id="UPA00940"/>
<dbReference type="Proteomes" id="UP000000596">
    <property type="component" value="Chromosome"/>
</dbReference>
<dbReference type="GO" id="GO:0120536">
    <property type="term" value="F:heptaprenylglyceryl phosphate synthase activity"/>
    <property type="evidence" value="ECO:0007669"/>
    <property type="project" value="RHEA"/>
</dbReference>
<dbReference type="GO" id="GO:0000287">
    <property type="term" value="F:magnesium ion binding"/>
    <property type="evidence" value="ECO:0007669"/>
    <property type="project" value="UniProtKB-UniRule"/>
</dbReference>
<dbReference type="GO" id="GO:0046474">
    <property type="term" value="P:glycerophospholipid biosynthetic process"/>
    <property type="evidence" value="ECO:0007669"/>
    <property type="project" value="UniProtKB-UniRule"/>
</dbReference>
<dbReference type="CDD" id="cd02812">
    <property type="entry name" value="PcrB_like"/>
    <property type="match status" value="1"/>
</dbReference>
<dbReference type="FunFam" id="3.20.20.390:FF:000001">
    <property type="entry name" value="Heptaprenylglyceryl phosphate synthase"/>
    <property type="match status" value="1"/>
</dbReference>
<dbReference type="Gene3D" id="3.20.20.390">
    <property type="entry name" value="FMN-linked oxidoreductases"/>
    <property type="match status" value="1"/>
</dbReference>
<dbReference type="HAMAP" id="MF_00112">
    <property type="entry name" value="GGGP_HepGP_synthase"/>
    <property type="match status" value="1"/>
</dbReference>
<dbReference type="InterPro" id="IPR039074">
    <property type="entry name" value="GGGP/HepGP_synthase_I"/>
</dbReference>
<dbReference type="InterPro" id="IPR038597">
    <property type="entry name" value="GGGP/HepGP_synthase_sf"/>
</dbReference>
<dbReference type="InterPro" id="IPR008205">
    <property type="entry name" value="GGGP_HepGP_synthase"/>
</dbReference>
<dbReference type="NCBIfam" id="TIGR01768">
    <property type="entry name" value="GGGP-family"/>
    <property type="match status" value="1"/>
</dbReference>
<dbReference type="NCBIfam" id="NF003197">
    <property type="entry name" value="PRK04169.1-1"/>
    <property type="match status" value="1"/>
</dbReference>
<dbReference type="NCBIfam" id="NF003199">
    <property type="entry name" value="PRK04169.1-3"/>
    <property type="match status" value="1"/>
</dbReference>
<dbReference type="NCBIfam" id="NF003200">
    <property type="entry name" value="PRK04169.1-4"/>
    <property type="match status" value="1"/>
</dbReference>
<dbReference type="PANTHER" id="PTHR40029">
    <property type="match status" value="1"/>
</dbReference>
<dbReference type="PANTHER" id="PTHR40029:SF2">
    <property type="entry name" value="HEPTAPRENYLGLYCERYL PHOSPHATE SYNTHASE"/>
    <property type="match status" value="1"/>
</dbReference>
<dbReference type="Pfam" id="PF01884">
    <property type="entry name" value="PcrB"/>
    <property type="match status" value="1"/>
</dbReference>
<dbReference type="SUPFAM" id="SSF51395">
    <property type="entry name" value="FMN-linked oxidoreductases"/>
    <property type="match status" value="1"/>
</dbReference>
<feature type="chain" id="PRO_0000138720" description="Heptaprenylglyceryl phosphate synthase">
    <location>
        <begin position="1"/>
        <end position="230"/>
    </location>
</feature>
<feature type="binding site" evidence="1">
    <location>
        <position position="12"/>
    </location>
    <ligand>
        <name>sn-glycerol 1-phosphate</name>
        <dbReference type="ChEBI" id="CHEBI:57685"/>
    </ligand>
</feature>
<feature type="binding site" evidence="1">
    <location>
        <position position="14"/>
    </location>
    <ligand>
        <name>Mg(2+)</name>
        <dbReference type="ChEBI" id="CHEBI:18420"/>
    </ligand>
</feature>
<feature type="binding site" evidence="1">
    <location>
        <position position="40"/>
    </location>
    <ligand>
        <name>Mg(2+)</name>
        <dbReference type="ChEBI" id="CHEBI:18420"/>
    </ligand>
</feature>
<feature type="binding site" evidence="1">
    <location>
        <begin position="159"/>
        <end position="164"/>
    </location>
    <ligand>
        <name>sn-glycerol 1-phosphate</name>
        <dbReference type="ChEBI" id="CHEBI:57685"/>
    </ligand>
</feature>
<feature type="binding site" evidence="1">
    <location>
        <position position="189"/>
    </location>
    <ligand>
        <name>sn-glycerol 1-phosphate</name>
        <dbReference type="ChEBI" id="CHEBI:57685"/>
    </ligand>
</feature>
<feature type="binding site" evidence="1">
    <location>
        <begin position="209"/>
        <end position="210"/>
    </location>
    <ligand>
        <name>sn-glycerol 1-phosphate</name>
        <dbReference type="ChEBI" id="CHEBI:57685"/>
    </ligand>
</feature>
<sequence length="230" mass="25842">MYDIKKWRHIFKLDPAKHISDDDLDAICMSQTDAIMIGGTDDVTEDNVIHLMSRVRRYPLPLVLEISNIESVMPGFDFYFVPTVLNSTDVAFHNGTLLEALKTYGHSIDFEEVIFEGYVVCNADSKVAKHTKANTDLTTEDLEAYAQMVNHLYRLPVMYIEYSGIYGDVSKVQAVSEHLTETQLFYGGGISSEQQATEMAAIADTIIVGDIIYKDIKKALKTVKIKESSK</sequence>
<evidence type="ECO:0000255" key="1">
    <source>
        <dbReference type="HAMAP-Rule" id="MF_00112"/>
    </source>
</evidence>
<organism>
    <name type="scientific">Staphylococcus aureus (strain MRSA252)</name>
    <dbReference type="NCBI Taxonomy" id="282458"/>
    <lineage>
        <taxon>Bacteria</taxon>
        <taxon>Bacillati</taxon>
        <taxon>Bacillota</taxon>
        <taxon>Bacilli</taxon>
        <taxon>Bacillales</taxon>
        <taxon>Staphylococcaceae</taxon>
        <taxon>Staphylococcus</taxon>
    </lineage>
</organism>
<protein>
    <recommendedName>
        <fullName evidence="1">Heptaprenylglyceryl phosphate synthase</fullName>
        <shortName evidence="1">HepGP synthase</shortName>
        <ecNumber evidence="1">2.5.1.n9</ecNumber>
    </recommendedName>
    <alternativeName>
        <fullName evidence="1">Glycerol-1-phosphate heptaprenyltransferase</fullName>
    </alternativeName>
</protein>
<proteinExistence type="inferred from homology"/>
<keyword id="KW-0444">Lipid biosynthesis</keyword>
<keyword id="KW-0443">Lipid metabolism</keyword>
<keyword id="KW-0460">Magnesium</keyword>
<keyword id="KW-0479">Metal-binding</keyword>
<keyword id="KW-0594">Phospholipid biosynthesis</keyword>
<keyword id="KW-1208">Phospholipid metabolism</keyword>
<keyword id="KW-0808">Transferase</keyword>
<accession>Q6GFF1</accession>
<name>PCRB_STAAR</name>
<comment type="function">
    <text evidence="1">Prenyltransferase that catalyzes in vivo the transfer of the heptaprenyl moiety of heptaprenyl pyrophosphate (HepPP; 35 carbon atoms) to the C3 hydroxyl of sn-glycerol-1-phosphate (G1P), producing heptaprenylglyceryl phosphate (HepGP). This reaction is an ether-bond-formation step in the biosynthesis of archaea-type G1P-based membrane lipids found in Bacillales.</text>
</comment>
<comment type="catalytic activity">
    <reaction evidence="1">
        <text>sn-glycerol 1-phosphate + all-trans-heptaprenyl diphosphate = 3-heptaprenyl-sn-glycero-1-phosphate + diphosphate</text>
        <dbReference type="Rhea" id="RHEA:33495"/>
        <dbReference type="ChEBI" id="CHEBI:33019"/>
        <dbReference type="ChEBI" id="CHEBI:57685"/>
        <dbReference type="ChEBI" id="CHEBI:58206"/>
        <dbReference type="ChEBI" id="CHEBI:64781"/>
        <dbReference type="EC" id="2.5.1.n9"/>
    </reaction>
</comment>
<comment type="cofactor">
    <cofactor evidence="1">
        <name>Mg(2+)</name>
        <dbReference type="ChEBI" id="CHEBI:18420"/>
    </cofactor>
</comment>
<comment type="pathway">
    <text evidence="1">Membrane lipid metabolism; glycerophospholipid metabolism.</text>
</comment>
<comment type="subunit">
    <text evidence="1">Homodimer.</text>
</comment>
<comment type="similarity">
    <text evidence="1">Belongs to the GGGP/HepGP synthase family. Group I subfamily.</text>
</comment>
<reference key="1">
    <citation type="journal article" date="2004" name="Proc. Natl. Acad. Sci. U.S.A.">
        <title>Complete genomes of two clinical Staphylococcus aureus strains: evidence for the rapid evolution of virulence and drug resistance.</title>
        <authorList>
            <person name="Holden M.T.G."/>
            <person name="Feil E.J."/>
            <person name="Lindsay J.A."/>
            <person name="Peacock S.J."/>
            <person name="Day N.P.J."/>
            <person name="Enright M.C."/>
            <person name="Foster T.J."/>
            <person name="Moore C.E."/>
            <person name="Hurst L."/>
            <person name="Atkin R."/>
            <person name="Barron A."/>
            <person name="Bason N."/>
            <person name="Bentley S.D."/>
            <person name="Chillingworth C."/>
            <person name="Chillingworth T."/>
            <person name="Churcher C."/>
            <person name="Clark L."/>
            <person name="Corton C."/>
            <person name="Cronin A."/>
            <person name="Doggett J."/>
            <person name="Dowd L."/>
            <person name="Feltwell T."/>
            <person name="Hance Z."/>
            <person name="Harris B."/>
            <person name="Hauser H."/>
            <person name="Holroyd S."/>
            <person name="Jagels K."/>
            <person name="James K.D."/>
            <person name="Lennard N."/>
            <person name="Line A."/>
            <person name="Mayes R."/>
            <person name="Moule S."/>
            <person name="Mungall K."/>
            <person name="Ormond D."/>
            <person name="Quail M.A."/>
            <person name="Rabbinowitsch E."/>
            <person name="Rutherford K.M."/>
            <person name="Sanders M."/>
            <person name="Sharp S."/>
            <person name="Simmonds M."/>
            <person name="Stevens K."/>
            <person name="Whitehead S."/>
            <person name="Barrell B.G."/>
            <person name="Spratt B.G."/>
            <person name="Parkhill J."/>
        </authorList>
    </citation>
    <scope>NUCLEOTIDE SEQUENCE [LARGE SCALE GENOMIC DNA]</scope>
    <source>
        <strain>MRSA252</strain>
    </source>
</reference>
<gene>
    <name evidence="1" type="primary">pcrB</name>
    <name type="ordered locus">SAR1998</name>
</gene>